<keyword id="KW-0012">Acyltransferase</keyword>
<keyword id="KW-0963">Cytoplasm</keyword>
<keyword id="KW-0408">Iron</keyword>
<keyword id="KW-0479">Metal-binding</keyword>
<keyword id="KW-0808">Transferase</keyword>
<keyword id="KW-0819">tRNA processing</keyword>
<name>TSAD_RICCN</name>
<evidence type="ECO:0000255" key="1">
    <source>
        <dbReference type="HAMAP-Rule" id="MF_01445"/>
    </source>
</evidence>
<reference key="1">
    <citation type="journal article" date="2001" name="Science">
        <title>Mechanisms of evolution in Rickettsia conorii and R. prowazekii.</title>
        <authorList>
            <person name="Ogata H."/>
            <person name="Audic S."/>
            <person name="Renesto-Audiffren P."/>
            <person name="Fournier P.-E."/>
            <person name="Barbe V."/>
            <person name="Samson D."/>
            <person name="Roux V."/>
            <person name="Cossart P."/>
            <person name="Weissenbach J."/>
            <person name="Claverie J.-M."/>
            <person name="Raoult D."/>
        </authorList>
    </citation>
    <scope>NUCLEOTIDE SEQUENCE [LARGE SCALE GENOMIC DNA]</scope>
    <source>
        <strain>ATCC VR-613 / Malish 7</strain>
    </source>
</reference>
<protein>
    <recommendedName>
        <fullName evidence="1">tRNA N6-adenosine threonylcarbamoyltransferase</fullName>
        <ecNumber evidence="1">2.3.1.234</ecNumber>
    </recommendedName>
    <alternativeName>
        <fullName evidence="1">N6-L-threonylcarbamoyladenine synthase</fullName>
        <shortName evidence="1">t(6)A synthase</shortName>
    </alternativeName>
    <alternativeName>
        <fullName evidence="1">t(6)A37 threonylcarbamoyladenosine biosynthesis protein TsaD</fullName>
    </alternativeName>
    <alternativeName>
        <fullName evidence="1">tRNA threonylcarbamoyladenosine biosynthesis protein TsaD</fullName>
    </alternativeName>
</protein>
<dbReference type="EC" id="2.3.1.234" evidence="1"/>
<dbReference type="EMBL" id="AE006914">
    <property type="protein sequence ID" value="AAL02599.1"/>
    <property type="molecule type" value="Genomic_DNA"/>
</dbReference>
<dbReference type="PIR" id="E97707">
    <property type="entry name" value="E97707"/>
</dbReference>
<dbReference type="RefSeq" id="WP_010976747.1">
    <property type="nucleotide sequence ID" value="NC_003103.1"/>
</dbReference>
<dbReference type="SMR" id="Q92JK6"/>
<dbReference type="GeneID" id="928604"/>
<dbReference type="KEGG" id="rco:RC0061"/>
<dbReference type="PATRIC" id="fig|272944.4.peg.72"/>
<dbReference type="HOGENOM" id="CLU_023208_0_2_5"/>
<dbReference type="Proteomes" id="UP000000816">
    <property type="component" value="Chromosome"/>
</dbReference>
<dbReference type="GO" id="GO:0005737">
    <property type="term" value="C:cytoplasm"/>
    <property type="evidence" value="ECO:0007669"/>
    <property type="project" value="UniProtKB-SubCell"/>
</dbReference>
<dbReference type="GO" id="GO:0005506">
    <property type="term" value="F:iron ion binding"/>
    <property type="evidence" value="ECO:0007669"/>
    <property type="project" value="UniProtKB-UniRule"/>
</dbReference>
<dbReference type="GO" id="GO:0061711">
    <property type="term" value="F:N(6)-L-threonylcarbamoyladenine synthase activity"/>
    <property type="evidence" value="ECO:0007669"/>
    <property type="project" value="UniProtKB-EC"/>
</dbReference>
<dbReference type="GO" id="GO:0002949">
    <property type="term" value="P:tRNA threonylcarbamoyladenosine modification"/>
    <property type="evidence" value="ECO:0007669"/>
    <property type="project" value="UniProtKB-UniRule"/>
</dbReference>
<dbReference type="CDD" id="cd24133">
    <property type="entry name" value="ASKHA_NBD_TsaD_bac"/>
    <property type="match status" value="1"/>
</dbReference>
<dbReference type="FunFam" id="3.30.420.40:FF:000012">
    <property type="entry name" value="tRNA N6-adenosine threonylcarbamoyltransferase"/>
    <property type="match status" value="1"/>
</dbReference>
<dbReference type="Gene3D" id="3.30.420.40">
    <property type="match status" value="2"/>
</dbReference>
<dbReference type="HAMAP" id="MF_01445">
    <property type="entry name" value="TsaD"/>
    <property type="match status" value="1"/>
</dbReference>
<dbReference type="InterPro" id="IPR043129">
    <property type="entry name" value="ATPase_NBD"/>
</dbReference>
<dbReference type="InterPro" id="IPR000905">
    <property type="entry name" value="Gcp-like_dom"/>
</dbReference>
<dbReference type="InterPro" id="IPR017861">
    <property type="entry name" value="KAE1/TsaD"/>
</dbReference>
<dbReference type="InterPro" id="IPR017860">
    <property type="entry name" value="Peptidase_M22_CS"/>
</dbReference>
<dbReference type="InterPro" id="IPR022450">
    <property type="entry name" value="TsaD"/>
</dbReference>
<dbReference type="NCBIfam" id="TIGR00329">
    <property type="entry name" value="gcp_kae1"/>
    <property type="match status" value="1"/>
</dbReference>
<dbReference type="NCBIfam" id="TIGR03723">
    <property type="entry name" value="T6A_TsaD_YgjD"/>
    <property type="match status" value="1"/>
</dbReference>
<dbReference type="PANTHER" id="PTHR11735">
    <property type="entry name" value="TRNA N6-ADENOSINE THREONYLCARBAMOYLTRANSFERASE"/>
    <property type="match status" value="1"/>
</dbReference>
<dbReference type="PANTHER" id="PTHR11735:SF6">
    <property type="entry name" value="TRNA N6-ADENOSINE THREONYLCARBAMOYLTRANSFERASE, MITOCHONDRIAL"/>
    <property type="match status" value="1"/>
</dbReference>
<dbReference type="Pfam" id="PF00814">
    <property type="entry name" value="TsaD"/>
    <property type="match status" value="1"/>
</dbReference>
<dbReference type="PRINTS" id="PR00789">
    <property type="entry name" value="OSIALOPTASE"/>
</dbReference>
<dbReference type="SUPFAM" id="SSF53067">
    <property type="entry name" value="Actin-like ATPase domain"/>
    <property type="match status" value="2"/>
</dbReference>
<dbReference type="PROSITE" id="PS01016">
    <property type="entry name" value="GLYCOPROTEASE"/>
    <property type="match status" value="1"/>
</dbReference>
<accession>Q92JK6</accession>
<gene>
    <name evidence="1" type="primary">tsaD</name>
    <name type="synonym">gcp</name>
    <name type="ordered locus">RC0061</name>
</gene>
<proteinExistence type="inferred from homology"/>
<comment type="function">
    <text evidence="1">Required for the formation of a threonylcarbamoyl group on adenosine at position 37 (t(6)A37) in tRNAs that read codons beginning with adenine. Is involved in the transfer of the threonylcarbamoyl moiety of threonylcarbamoyl-AMP (TC-AMP) to the N6 group of A37, together with TsaE and TsaB. TsaD likely plays a direct catalytic role in this reaction.</text>
</comment>
<comment type="catalytic activity">
    <reaction evidence="1">
        <text>L-threonylcarbamoyladenylate + adenosine(37) in tRNA = N(6)-L-threonylcarbamoyladenosine(37) in tRNA + AMP + H(+)</text>
        <dbReference type="Rhea" id="RHEA:37059"/>
        <dbReference type="Rhea" id="RHEA-COMP:10162"/>
        <dbReference type="Rhea" id="RHEA-COMP:10163"/>
        <dbReference type="ChEBI" id="CHEBI:15378"/>
        <dbReference type="ChEBI" id="CHEBI:73682"/>
        <dbReference type="ChEBI" id="CHEBI:74411"/>
        <dbReference type="ChEBI" id="CHEBI:74418"/>
        <dbReference type="ChEBI" id="CHEBI:456215"/>
        <dbReference type="EC" id="2.3.1.234"/>
    </reaction>
</comment>
<comment type="cofactor">
    <cofactor evidence="1">
        <name>Fe(2+)</name>
        <dbReference type="ChEBI" id="CHEBI:29033"/>
    </cofactor>
    <text evidence="1">Binds 1 Fe(2+) ion per subunit.</text>
</comment>
<comment type="subcellular location">
    <subcellularLocation>
        <location evidence="1">Cytoplasm</location>
    </subcellularLocation>
</comment>
<comment type="similarity">
    <text evidence="1">Belongs to the KAE1 / TsaD family.</text>
</comment>
<organism>
    <name type="scientific">Rickettsia conorii (strain ATCC VR-613 / Malish 7)</name>
    <dbReference type="NCBI Taxonomy" id="272944"/>
    <lineage>
        <taxon>Bacteria</taxon>
        <taxon>Pseudomonadati</taxon>
        <taxon>Pseudomonadota</taxon>
        <taxon>Alphaproteobacteria</taxon>
        <taxon>Rickettsiales</taxon>
        <taxon>Rickettsiaceae</taxon>
        <taxon>Rickettsieae</taxon>
        <taxon>Rickettsia</taxon>
        <taxon>spotted fever group</taxon>
    </lineage>
</organism>
<sequence>MIKILGIESSCDDTAVSIITENREILSNIIISQNTEHAVFGGVVPEIAARSHLSHLDKALKNVLKESNTKLTDISTIAATSGPGLIGGVIVGSMFARSLSSALKKPFIAINHLEGHALTARLTDNIPYPYLLLLASGGHCQFVAVLGLGKYKILGSTIDDAVGEAFDKVAKMLNLAFPGGPEIEKRAKLGDPHKYKFPKPIINSGNCNMSFSGLKTAVRTLIMTLKEINDTVINDIAASFQFTIGEILSSKVQDAIRAYEQITNNFDKKNIVIAGGVAANKYLQKILSSCAKTYGYRLIYPPIHLCTDNAAMIAYAGLERYNNKLFTPLNFCPKARWSLEDISN</sequence>
<feature type="chain" id="PRO_0000303523" description="tRNA N6-adenosine threonylcarbamoyltransferase">
    <location>
        <begin position="1"/>
        <end position="344"/>
    </location>
</feature>
<feature type="binding site" evidence="1">
    <location>
        <position position="112"/>
    </location>
    <ligand>
        <name>Fe cation</name>
        <dbReference type="ChEBI" id="CHEBI:24875"/>
    </ligand>
</feature>
<feature type="binding site" evidence="1">
    <location>
        <position position="116"/>
    </location>
    <ligand>
        <name>Fe cation</name>
        <dbReference type="ChEBI" id="CHEBI:24875"/>
    </ligand>
</feature>
<feature type="binding site" evidence="1">
    <location>
        <begin position="134"/>
        <end position="138"/>
    </location>
    <ligand>
        <name>substrate</name>
    </ligand>
</feature>
<feature type="binding site" evidence="1">
    <location>
        <position position="167"/>
    </location>
    <ligand>
        <name>substrate</name>
    </ligand>
</feature>
<feature type="binding site" evidence="1">
    <location>
        <position position="180"/>
    </location>
    <ligand>
        <name>substrate</name>
    </ligand>
</feature>
<feature type="binding site" evidence="1">
    <location>
        <position position="280"/>
    </location>
    <ligand>
        <name>substrate</name>
    </ligand>
</feature>
<feature type="binding site" evidence="1">
    <location>
        <position position="308"/>
    </location>
    <ligand>
        <name>Fe cation</name>
        <dbReference type="ChEBI" id="CHEBI:24875"/>
    </ligand>
</feature>